<name>RPOB_COLP3</name>
<accession>Q47UV9</accession>
<evidence type="ECO:0000255" key="1">
    <source>
        <dbReference type="HAMAP-Rule" id="MF_01321"/>
    </source>
</evidence>
<dbReference type="EC" id="2.7.7.6" evidence="1"/>
<dbReference type="EMBL" id="CP000083">
    <property type="protein sequence ID" value="AAZ24907.1"/>
    <property type="molecule type" value="Genomic_DNA"/>
</dbReference>
<dbReference type="RefSeq" id="WP_011045494.1">
    <property type="nucleotide sequence ID" value="NC_003910.7"/>
</dbReference>
<dbReference type="SMR" id="Q47UV9"/>
<dbReference type="STRING" id="167879.CPS_4769"/>
<dbReference type="KEGG" id="cps:CPS_4769"/>
<dbReference type="eggNOG" id="COG0085">
    <property type="taxonomic scope" value="Bacteria"/>
</dbReference>
<dbReference type="HOGENOM" id="CLU_000524_4_0_6"/>
<dbReference type="Proteomes" id="UP000000547">
    <property type="component" value="Chromosome"/>
</dbReference>
<dbReference type="GO" id="GO:0000428">
    <property type="term" value="C:DNA-directed RNA polymerase complex"/>
    <property type="evidence" value="ECO:0007669"/>
    <property type="project" value="UniProtKB-KW"/>
</dbReference>
<dbReference type="GO" id="GO:0003677">
    <property type="term" value="F:DNA binding"/>
    <property type="evidence" value="ECO:0007669"/>
    <property type="project" value="UniProtKB-UniRule"/>
</dbReference>
<dbReference type="GO" id="GO:0003899">
    <property type="term" value="F:DNA-directed RNA polymerase activity"/>
    <property type="evidence" value="ECO:0007669"/>
    <property type="project" value="UniProtKB-UniRule"/>
</dbReference>
<dbReference type="GO" id="GO:0032549">
    <property type="term" value="F:ribonucleoside binding"/>
    <property type="evidence" value="ECO:0007669"/>
    <property type="project" value="InterPro"/>
</dbReference>
<dbReference type="GO" id="GO:0006351">
    <property type="term" value="P:DNA-templated transcription"/>
    <property type="evidence" value="ECO:0007669"/>
    <property type="project" value="UniProtKB-UniRule"/>
</dbReference>
<dbReference type="CDD" id="cd00653">
    <property type="entry name" value="RNA_pol_B_RPB2"/>
    <property type="match status" value="1"/>
</dbReference>
<dbReference type="FunFam" id="2.40.270.10:FF:000004">
    <property type="entry name" value="DNA-directed RNA polymerase subunit beta"/>
    <property type="match status" value="1"/>
</dbReference>
<dbReference type="FunFam" id="2.40.50.100:FF:000006">
    <property type="entry name" value="DNA-directed RNA polymerase subunit beta"/>
    <property type="match status" value="1"/>
</dbReference>
<dbReference type="FunFam" id="2.40.50.150:FF:000001">
    <property type="entry name" value="DNA-directed RNA polymerase subunit beta"/>
    <property type="match status" value="1"/>
</dbReference>
<dbReference type="FunFam" id="3.90.1100.10:FF:000002">
    <property type="entry name" value="DNA-directed RNA polymerase subunit beta"/>
    <property type="match status" value="1"/>
</dbReference>
<dbReference type="FunFam" id="3.90.1110.10:FF:000001">
    <property type="entry name" value="DNA-directed RNA polymerase subunit beta"/>
    <property type="match status" value="1"/>
</dbReference>
<dbReference type="FunFam" id="3.90.1800.10:FF:000001">
    <property type="entry name" value="DNA-directed RNA polymerase subunit beta"/>
    <property type="match status" value="1"/>
</dbReference>
<dbReference type="Gene3D" id="2.40.50.100">
    <property type="match status" value="1"/>
</dbReference>
<dbReference type="Gene3D" id="2.40.50.150">
    <property type="match status" value="1"/>
</dbReference>
<dbReference type="Gene3D" id="3.90.1100.10">
    <property type="match status" value="2"/>
</dbReference>
<dbReference type="Gene3D" id="6.10.140.1670">
    <property type="match status" value="1"/>
</dbReference>
<dbReference type="Gene3D" id="2.30.150.10">
    <property type="entry name" value="DNA-directed RNA polymerase, beta subunit, external 1 domain"/>
    <property type="match status" value="1"/>
</dbReference>
<dbReference type="Gene3D" id="2.40.270.10">
    <property type="entry name" value="DNA-directed RNA polymerase, subunit 2, domain 6"/>
    <property type="match status" value="1"/>
</dbReference>
<dbReference type="Gene3D" id="3.90.1800.10">
    <property type="entry name" value="RNA polymerase alpha subunit dimerisation domain"/>
    <property type="match status" value="1"/>
</dbReference>
<dbReference type="Gene3D" id="3.90.1110.10">
    <property type="entry name" value="RNA polymerase Rpb2, domain 2"/>
    <property type="match status" value="1"/>
</dbReference>
<dbReference type="HAMAP" id="MF_01321">
    <property type="entry name" value="RNApol_bact_RpoB"/>
    <property type="match status" value="1"/>
</dbReference>
<dbReference type="InterPro" id="IPR042107">
    <property type="entry name" value="DNA-dir_RNA_pol_bsu_ext_1_sf"/>
</dbReference>
<dbReference type="InterPro" id="IPR019462">
    <property type="entry name" value="DNA-dir_RNA_pol_bsu_external_1"/>
</dbReference>
<dbReference type="InterPro" id="IPR015712">
    <property type="entry name" value="DNA-dir_RNA_pol_su2"/>
</dbReference>
<dbReference type="InterPro" id="IPR007120">
    <property type="entry name" value="DNA-dir_RNAP_su2_dom"/>
</dbReference>
<dbReference type="InterPro" id="IPR037033">
    <property type="entry name" value="DNA-dir_RNAP_su2_hyb_sf"/>
</dbReference>
<dbReference type="InterPro" id="IPR010243">
    <property type="entry name" value="RNA_pol_bsu_bac"/>
</dbReference>
<dbReference type="InterPro" id="IPR007121">
    <property type="entry name" value="RNA_pol_bsu_CS"/>
</dbReference>
<dbReference type="InterPro" id="IPR007644">
    <property type="entry name" value="RNA_pol_bsu_protrusion"/>
</dbReference>
<dbReference type="InterPro" id="IPR007642">
    <property type="entry name" value="RNA_pol_Rpb2_2"/>
</dbReference>
<dbReference type="InterPro" id="IPR037034">
    <property type="entry name" value="RNA_pol_Rpb2_2_sf"/>
</dbReference>
<dbReference type="InterPro" id="IPR007645">
    <property type="entry name" value="RNA_pol_Rpb2_3"/>
</dbReference>
<dbReference type="InterPro" id="IPR007641">
    <property type="entry name" value="RNA_pol_Rpb2_7"/>
</dbReference>
<dbReference type="InterPro" id="IPR014724">
    <property type="entry name" value="RNA_pol_RPB2_OB-fold"/>
</dbReference>
<dbReference type="NCBIfam" id="NF001616">
    <property type="entry name" value="PRK00405.1"/>
    <property type="match status" value="1"/>
</dbReference>
<dbReference type="NCBIfam" id="TIGR02013">
    <property type="entry name" value="rpoB"/>
    <property type="match status" value="1"/>
</dbReference>
<dbReference type="PANTHER" id="PTHR20856">
    <property type="entry name" value="DNA-DIRECTED RNA POLYMERASE I SUBUNIT 2"/>
    <property type="match status" value="1"/>
</dbReference>
<dbReference type="Pfam" id="PF04563">
    <property type="entry name" value="RNA_pol_Rpb2_1"/>
    <property type="match status" value="1"/>
</dbReference>
<dbReference type="Pfam" id="PF04561">
    <property type="entry name" value="RNA_pol_Rpb2_2"/>
    <property type="match status" value="2"/>
</dbReference>
<dbReference type="Pfam" id="PF04565">
    <property type="entry name" value="RNA_pol_Rpb2_3"/>
    <property type="match status" value="1"/>
</dbReference>
<dbReference type="Pfam" id="PF10385">
    <property type="entry name" value="RNA_pol_Rpb2_45"/>
    <property type="match status" value="1"/>
</dbReference>
<dbReference type="Pfam" id="PF00562">
    <property type="entry name" value="RNA_pol_Rpb2_6"/>
    <property type="match status" value="1"/>
</dbReference>
<dbReference type="Pfam" id="PF04560">
    <property type="entry name" value="RNA_pol_Rpb2_7"/>
    <property type="match status" value="1"/>
</dbReference>
<dbReference type="SUPFAM" id="SSF64484">
    <property type="entry name" value="beta and beta-prime subunits of DNA dependent RNA-polymerase"/>
    <property type="match status" value="1"/>
</dbReference>
<dbReference type="PROSITE" id="PS01166">
    <property type="entry name" value="RNA_POL_BETA"/>
    <property type="match status" value="1"/>
</dbReference>
<sequence>MAYSYFEKKRIRKDFGKSVQVMEYPFLLSIQLDSFRKFIDTDPTGETGLEAAFRSIFPIKAYSGSSELQYVSYRLGEPLFDVKECQIRGVTYSAPLRVKLRLVVYDKEAAAGTVKDIKEQEVYMGEIPLMTDNGTFVINGTERVIVSQLHRSPGVFFDHDKGKTHSSGKVLYNARVIPYRGSWLDFEFDPKDNLFVRIDRRRKLPASIILRALEYSTEEILAMFYDTTDYTIKGDKLIMDLIPERLRGETAIFDISIKKGEVLVESGRRITARHIRALSKAKLEKLEVPADYIVGRVLSKAYIDKSTGEVIAEANAIITLELLAELSQAGHKVLSTLYMNEFDVGSYMSDTLRVDSSTNKLEALVEVYRMMRPGEPPTKDAAEGLFSNLFFASERYDLSTVGRMKFNRRVGNADDVGTGILSKEDIISVMKTLIGIRDGKGEVDDIDHLGNRRIRSVGEMAENQFRVGLVRVERAVRERLSLGDLDAIMPQDLINAKPISAAVKEFFGSSQLSQFMDQNNPLSEVTHKRRISALGPGGLTRERAGFEVRDVHPTHYGRVCPIETPEGPNIGLINSLSCYARTNDFGFLETPYRKVIDGLVTDEIDYLSAIEEGNFVIAQANAERNDSNKLVQDLVNCRHRNEFILKASAEVQYMDVSPQQIISVAASLIPFLEHDDANRALMGSNMQRQAVPTLRVDKPLVGTGMEKVVAVDSGVTAVAKRGGVVSYVDASRIVVKVNENEMHAGEAGIDIYNLTKYTRSNQNTCINQRPVCRMGEPVVRGDVLADGPSTDMGELALGQNMRIAFMPWNGYNFEDSMLLSERVAIEDRFTTIHIQELTCIARDTKLGSEEITADIPNVGESALSKLDEAGVVYIGAEVNGGDILVGKVTPKGETQLTPEEKLLRAIFGEKAADVKDSSLRVPNSVKGTIIDVQIFTRDGVEKDARAVEIEQMQLKEVKKDLGDELSILEDGIYARTKKLLLSAGLNESDLTSMSRDKWLTQNLADEGQQAELEQIAEQFDNIKEDFDKKFEVKRRKITQGDDLQPGVLKIVKVYLAVKRHIQPGDKMAGRHGNKGVISNVVPVEDMPYDQFGVPVDIVLNPLGVPSRMNIGQILETHLGMACRGIGEKINRMLEAQQEIHKLRNFIQEVYNVGESRQVVDVASFSDDEVLRLAGNLRAGLPIATPAFDGAAEKEIKELFVLADMPQSGQFVLTDGRTGREFERPVTVGYMYMLKLNHLVDDKMHARSTGSYSLVTQQPLGGKAQFGGQRFGEMEVWALEAYGAAYTLQEMLTVKSDDVNGRTKMYKNLVDGDHRMEPGIPESFNVLLKEIRSLGINIELDKD</sequence>
<organism>
    <name type="scientific">Colwellia psychrerythraea (strain 34H / ATCC BAA-681)</name>
    <name type="common">Vibrio psychroerythus</name>
    <dbReference type="NCBI Taxonomy" id="167879"/>
    <lineage>
        <taxon>Bacteria</taxon>
        <taxon>Pseudomonadati</taxon>
        <taxon>Pseudomonadota</taxon>
        <taxon>Gammaproteobacteria</taxon>
        <taxon>Alteromonadales</taxon>
        <taxon>Colwelliaceae</taxon>
        <taxon>Colwellia</taxon>
    </lineage>
</organism>
<protein>
    <recommendedName>
        <fullName evidence="1">DNA-directed RNA polymerase subunit beta</fullName>
        <shortName evidence="1">RNAP subunit beta</shortName>
        <ecNumber evidence="1">2.7.7.6</ecNumber>
    </recommendedName>
    <alternativeName>
        <fullName evidence="1">RNA polymerase subunit beta</fullName>
    </alternativeName>
    <alternativeName>
        <fullName evidence="1">Transcriptase subunit beta</fullName>
    </alternativeName>
</protein>
<comment type="function">
    <text evidence="1">DNA-dependent RNA polymerase catalyzes the transcription of DNA into RNA using the four ribonucleoside triphosphates as substrates.</text>
</comment>
<comment type="catalytic activity">
    <reaction evidence="1">
        <text>RNA(n) + a ribonucleoside 5'-triphosphate = RNA(n+1) + diphosphate</text>
        <dbReference type="Rhea" id="RHEA:21248"/>
        <dbReference type="Rhea" id="RHEA-COMP:14527"/>
        <dbReference type="Rhea" id="RHEA-COMP:17342"/>
        <dbReference type="ChEBI" id="CHEBI:33019"/>
        <dbReference type="ChEBI" id="CHEBI:61557"/>
        <dbReference type="ChEBI" id="CHEBI:140395"/>
        <dbReference type="EC" id="2.7.7.6"/>
    </reaction>
</comment>
<comment type="subunit">
    <text evidence="1">The RNAP catalytic core consists of 2 alpha, 1 beta, 1 beta' and 1 omega subunit. When a sigma factor is associated with the core the holoenzyme is formed, which can initiate transcription.</text>
</comment>
<comment type="similarity">
    <text evidence="1">Belongs to the RNA polymerase beta chain family.</text>
</comment>
<gene>
    <name evidence="1" type="primary">rpoB</name>
    <name type="ordered locus">CPS_4769</name>
</gene>
<keyword id="KW-0240">DNA-directed RNA polymerase</keyword>
<keyword id="KW-0548">Nucleotidyltransferase</keyword>
<keyword id="KW-0804">Transcription</keyword>
<keyword id="KW-0808">Transferase</keyword>
<reference key="1">
    <citation type="journal article" date="2005" name="Proc. Natl. Acad. Sci. U.S.A.">
        <title>The psychrophilic lifestyle as revealed by the genome sequence of Colwellia psychrerythraea 34H through genomic and proteomic analyses.</title>
        <authorList>
            <person name="Methe B.A."/>
            <person name="Nelson K.E."/>
            <person name="Deming J.W."/>
            <person name="Momen B."/>
            <person name="Melamud E."/>
            <person name="Zhang X."/>
            <person name="Moult J."/>
            <person name="Madupu R."/>
            <person name="Nelson W.C."/>
            <person name="Dodson R.J."/>
            <person name="Brinkac L.M."/>
            <person name="Daugherty S.C."/>
            <person name="Durkin A.S."/>
            <person name="DeBoy R.T."/>
            <person name="Kolonay J.F."/>
            <person name="Sullivan S.A."/>
            <person name="Zhou L."/>
            <person name="Davidsen T.M."/>
            <person name="Wu M."/>
            <person name="Huston A.L."/>
            <person name="Lewis M."/>
            <person name="Weaver B."/>
            <person name="Weidman J.F."/>
            <person name="Khouri H."/>
            <person name="Utterback T.R."/>
            <person name="Feldblyum T.V."/>
            <person name="Fraser C.M."/>
        </authorList>
    </citation>
    <scope>NUCLEOTIDE SEQUENCE [LARGE SCALE GENOMIC DNA]</scope>
    <source>
        <strain>34H / ATCC BAA-681</strain>
    </source>
</reference>
<feature type="chain" id="PRO_0000224046" description="DNA-directed RNA polymerase subunit beta">
    <location>
        <begin position="1"/>
        <end position="1342"/>
    </location>
</feature>
<proteinExistence type="inferred from homology"/>